<protein>
    <recommendedName>
        <fullName>Probable RNA methyltransferase C2A9.10</fullName>
        <ecNumber>2.1.1.-</ecNumber>
    </recommendedName>
</protein>
<reference key="1">
    <citation type="journal article" date="2002" name="Nature">
        <title>The genome sequence of Schizosaccharomyces pombe.</title>
        <authorList>
            <person name="Wood V."/>
            <person name="Gwilliam R."/>
            <person name="Rajandream M.A."/>
            <person name="Lyne M.H."/>
            <person name="Lyne R."/>
            <person name="Stewart A."/>
            <person name="Sgouros J.G."/>
            <person name="Peat N."/>
            <person name="Hayles J."/>
            <person name="Baker S.G."/>
            <person name="Basham D."/>
            <person name="Bowman S."/>
            <person name="Brooks K."/>
            <person name="Brown D."/>
            <person name="Brown S."/>
            <person name="Chillingworth T."/>
            <person name="Churcher C.M."/>
            <person name="Collins M."/>
            <person name="Connor R."/>
            <person name="Cronin A."/>
            <person name="Davis P."/>
            <person name="Feltwell T."/>
            <person name="Fraser A."/>
            <person name="Gentles S."/>
            <person name="Goble A."/>
            <person name="Hamlin N."/>
            <person name="Harris D.E."/>
            <person name="Hidalgo J."/>
            <person name="Hodgson G."/>
            <person name="Holroyd S."/>
            <person name="Hornsby T."/>
            <person name="Howarth S."/>
            <person name="Huckle E.J."/>
            <person name="Hunt S."/>
            <person name="Jagels K."/>
            <person name="James K.D."/>
            <person name="Jones L."/>
            <person name="Jones M."/>
            <person name="Leather S."/>
            <person name="McDonald S."/>
            <person name="McLean J."/>
            <person name="Mooney P."/>
            <person name="Moule S."/>
            <person name="Mungall K.L."/>
            <person name="Murphy L.D."/>
            <person name="Niblett D."/>
            <person name="Odell C."/>
            <person name="Oliver K."/>
            <person name="O'Neil S."/>
            <person name="Pearson D."/>
            <person name="Quail M.A."/>
            <person name="Rabbinowitsch E."/>
            <person name="Rutherford K.M."/>
            <person name="Rutter S."/>
            <person name="Saunders D."/>
            <person name="Seeger K."/>
            <person name="Sharp S."/>
            <person name="Skelton J."/>
            <person name="Simmonds M.N."/>
            <person name="Squares R."/>
            <person name="Squares S."/>
            <person name="Stevens K."/>
            <person name="Taylor K."/>
            <person name="Taylor R.G."/>
            <person name="Tivey A."/>
            <person name="Walsh S.V."/>
            <person name="Warren T."/>
            <person name="Whitehead S."/>
            <person name="Woodward J.R."/>
            <person name="Volckaert G."/>
            <person name="Aert R."/>
            <person name="Robben J."/>
            <person name="Grymonprez B."/>
            <person name="Weltjens I."/>
            <person name="Vanstreels E."/>
            <person name="Rieger M."/>
            <person name="Schaefer M."/>
            <person name="Mueller-Auer S."/>
            <person name="Gabel C."/>
            <person name="Fuchs M."/>
            <person name="Duesterhoeft A."/>
            <person name="Fritzc C."/>
            <person name="Holzer E."/>
            <person name="Moestl D."/>
            <person name="Hilbert H."/>
            <person name="Borzym K."/>
            <person name="Langer I."/>
            <person name="Beck A."/>
            <person name="Lehrach H."/>
            <person name="Reinhardt R."/>
            <person name="Pohl T.M."/>
            <person name="Eger P."/>
            <person name="Zimmermann W."/>
            <person name="Wedler H."/>
            <person name="Wambutt R."/>
            <person name="Purnelle B."/>
            <person name="Goffeau A."/>
            <person name="Cadieu E."/>
            <person name="Dreano S."/>
            <person name="Gloux S."/>
            <person name="Lelaure V."/>
            <person name="Mottier S."/>
            <person name="Galibert F."/>
            <person name="Aves S.J."/>
            <person name="Xiang Z."/>
            <person name="Hunt C."/>
            <person name="Moore K."/>
            <person name="Hurst S.M."/>
            <person name="Lucas M."/>
            <person name="Rochet M."/>
            <person name="Gaillardin C."/>
            <person name="Tallada V.A."/>
            <person name="Garzon A."/>
            <person name="Thode G."/>
            <person name="Daga R.R."/>
            <person name="Cruzado L."/>
            <person name="Jimenez J."/>
            <person name="Sanchez M."/>
            <person name="del Rey F."/>
            <person name="Benito J."/>
            <person name="Dominguez A."/>
            <person name="Revuelta J.L."/>
            <person name="Moreno S."/>
            <person name="Armstrong J."/>
            <person name="Forsburg S.L."/>
            <person name="Cerutti L."/>
            <person name="Lowe T."/>
            <person name="McCombie W.R."/>
            <person name="Paulsen I."/>
            <person name="Potashkin J."/>
            <person name="Shpakovski G.V."/>
            <person name="Ussery D."/>
            <person name="Barrell B.G."/>
            <person name="Nurse P."/>
        </authorList>
    </citation>
    <scope>NUCLEOTIDE SEQUENCE [LARGE SCALE GENOMIC DNA]</scope>
    <source>
        <strain>972 / ATCC 24843</strain>
    </source>
</reference>
<gene>
    <name type="ORF">SPBC2A9.10</name>
</gene>
<name>BIN3D_SCHPO</name>
<organism>
    <name type="scientific">Schizosaccharomyces pombe (strain 972 / ATCC 24843)</name>
    <name type="common">Fission yeast</name>
    <dbReference type="NCBI Taxonomy" id="284812"/>
    <lineage>
        <taxon>Eukaryota</taxon>
        <taxon>Fungi</taxon>
        <taxon>Dikarya</taxon>
        <taxon>Ascomycota</taxon>
        <taxon>Taphrinomycotina</taxon>
        <taxon>Schizosaccharomycetes</taxon>
        <taxon>Schizosaccharomycetales</taxon>
        <taxon>Schizosaccharomycetaceae</taxon>
        <taxon>Schizosaccharomyces</taxon>
    </lineage>
</organism>
<sequence>MSNFQHGNYHSYYSMRGGTSIIDPRLKCLPDSLFYEASVLDIGCNNGTVSAQIASIFGASFVLGLDIDHVLIQKARKHLEFVSSRIGPVRNPGSIVEDQFNYYPISSIKKFSRIPVQLQPPLNKQNFPHNIEFETADFLRWESKRKFKIILALSVSKWVHLNNHDEGIIKFFGKISSLLETNGVLILEPQGWDSYLKAAKKISVFNQTPENLKIQPDAFEHLLNQAGLVLEYSIEPQVNNSEYKNFAKRTMYIYKKKGIGIIKLLTST</sequence>
<accession>Q9Y7L2</accession>
<proteinExistence type="inferred from homology"/>
<comment type="function">
    <text evidence="1">Probable RNA methyltransferase.</text>
</comment>
<comment type="similarity">
    <text evidence="3">Belongs to the methyltransferase superfamily.</text>
</comment>
<feature type="chain" id="PRO_0000289271" description="Probable RNA methyltransferase C2A9.10">
    <location>
        <begin position="1"/>
        <end position="268"/>
    </location>
</feature>
<feature type="domain" description="Bin3-type SAM" evidence="2">
    <location>
        <begin position="23"/>
        <end position="258"/>
    </location>
</feature>
<evidence type="ECO:0000250" key="1"/>
<evidence type="ECO:0000255" key="2">
    <source>
        <dbReference type="PROSITE-ProRule" id="PRU00848"/>
    </source>
</evidence>
<evidence type="ECO:0000305" key="3"/>
<dbReference type="EC" id="2.1.1.-"/>
<dbReference type="EMBL" id="CU329671">
    <property type="protein sequence ID" value="CAB39852.1"/>
    <property type="molecule type" value="Genomic_DNA"/>
</dbReference>
<dbReference type="PIR" id="T40101">
    <property type="entry name" value="T40101"/>
</dbReference>
<dbReference type="SMR" id="Q9Y7L2"/>
<dbReference type="BioGRID" id="276861">
    <property type="interactions" value="12"/>
</dbReference>
<dbReference type="FunCoup" id="Q9Y7L2">
    <property type="interactions" value="18"/>
</dbReference>
<dbReference type="STRING" id="284812.Q9Y7L2"/>
<dbReference type="PaxDb" id="4896-SPBC2A9.10.1"/>
<dbReference type="EnsemblFungi" id="SPBC2A9.10.1">
    <property type="protein sequence ID" value="SPBC2A9.10.1:pep"/>
    <property type="gene ID" value="SPBC2A9.10"/>
</dbReference>
<dbReference type="KEGG" id="spo:2540331"/>
<dbReference type="PomBase" id="SPBC2A9.10"/>
<dbReference type="VEuPathDB" id="FungiDB:SPBC2A9.10"/>
<dbReference type="eggNOG" id="KOG2899">
    <property type="taxonomic scope" value="Eukaryota"/>
</dbReference>
<dbReference type="HOGENOM" id="CLU_004729_2_0_1"/>
<dbReference type="InParanoid" id="Q9Y7L2"/>
<dbReference type="OMA" id="KWIHLFH"/>
<dbReference type="PhylomeDB" id="Q9Y7L2"/>
<dbReference type="PRO" id="PR:Q9Y7L2"/>
<dbReference type="Proteomes" id="UP000002485">
    <property type="component" value="Chromosome II"/>
</dbReference>
<dbReference type="GO" id="GO:0005732">
    <property type="term" value="C:sno(s)RNA-containing ribonucleoprotein complex"/>
    <property type="evidence" value="ECO:0000269"/>
    <property type="project" value="PomBase"/>
</dbReference>
<dbReference type="GO" id="GO:0005697">
    <property type="term" value="C:telomerase holoenzyme complex"/>
    <property type="evidence" value="ECO:0000269"/>
    <property type="project" value="PomBase"/>
</dbReference>
<dbReference type="GO" id="GO:0008171">
    <property type="term" value="F:O-methyltransferase activity"/>
    <property type="evidence" value="ECO:0000318"/>
    <property type="project" value="GO_Central"/>
</dbReference>
<dbReference type="GO" id="GO:1990276">
    <property type="term" value="F:RNA 5'-gamma-phosphate methyltransferase activity"/>
    <property type="evidence" value="ECO:0000269"/>
    <property type="project" value="PomBase"/>
</dbReference>
<dbReference type="GO" id="GO:0008173">
    <property type="term" value="F:RNA methyltransferase activity"/>
    <property type="evidence" value="ECO:0000318"/>
    <property type="project" value="GO_Central"/>
</dbReference>
<dbReference type="GO" id="GO:0030515">
    <property type="term" value="F:snoRNA binding"/>
    <property type="evidence" value="ECO:0000353"/>
    <property type="project" value="PomBase"/>
</dbReference>
<dbReference type="GO" id="GO:0017069">
    <property type="term" value="F:snRNA binding"/>
    <property type="evidence" value="ECO:0000318"/>
    <property type="project" value="GO_Central"/>
</dbReference>
<dbReference type="GO" id="GO:0032259">
    <property type="term" value="P:methylation"/>
    <property type="evidence" value="ECO:0007669"/>
    <property type="project" value="UniProtKB-KW"/>
</dbReference>
<dbReference type="GO" id="GO:0040031">
    <property type="term" value="P:snRNA modification"/>
    <property type="evidence" value="ECO:0000318"/>
    <property type="project" value="GO_Central"/>
</dbReference>
<dbReference type="GO" id="GO:0016180">
    <property type="term" value="P:snRNA processing"/>
    <property type="evidence" value="ECO:0000315"/>
    <property type="project" value="PomBase"/>
</dbReference>
<dbReference type="GO" id="GO:0000723">
    <property type="term" value="P:telomere maintenance"/>
    <property type="evidence" value="ECO:0000314"/>
    <property type="project" value="PomBase"/>
</dbReference>
<dbReference type="CDD" id="cd02440">
    <property type="entry name" value="AdoMet_MTases"/>
    <property type="match status" value="1"/>
</dbReference>
<dbReference type="Gene3D" id="3.40.50.150">
    <property type="entry name" value="Vaccinia Virus protein VP39"/>
    <property type="match status" value="1"/>
</dbReference>
<dbReference type="InterPro" id="IPR039772">
    <property type="entry name" value="Bin3-like"/>
</dbReference>
<dbReference type="InterPro" id="IPR010675">
    <property type="entry name" value="Bin3_C"/>
</dbReference>
<dbReference type="InterPro" id="IPR024160">
    <property type="entry name" value="BIN3_SAM-bd_dom"/>
</dbReference>
<dbReference type="InterPro" id="IPR029063">
    <property type="entry name" value="SAM-dependent_MTases_sf"/>
</dbReference>
<dbReference type="PANTHER" id="PTHR12315:SF0">
    <property type="entry name" value="7SK SNRNA METHYLPHOSPHATE CAPPING ENZYME"/>
    <property type="match status" value="1"/>
</dbReference>
<dbReference type="PANTHER" id="PTHR12315">
    <property type="entry name" value="BICOID-INTERACTING PROTEIN RELATED"/>
    <property type="match status" value="1"/>
</dbReference>
<dbReference type="Pfam" id="PF06859">
    <property type="entry name" value="Bin3"/>
    <property type="match status" value="1"/>
</dbReference>
<dbReference type="SUPFAM" id="SSF53335">
    <property type="entry name" value="S-adenosyl-L-methionine-dependent methyltransferases"/>
    <property type="match status" value="1"/>
</dbReference>
<dbReference type="PROSITE" id="PS51515">
    <property type="entry name" value="BIN3_SAM"/>
    <property type="match status" value="1"/>
</dbReference>
<keyword id="KW-0489">Methyltransferase</keyword>
<keyword id="KW-1185">Reference proteome</keyword>
<keyword id="KW-0949">S-adenosyl-L-methionine</keyword>
<keyword id="KW-0808">Transferase</keyword>